<comment type="function">
    <text evidence="2">Catalyzes the cross-linking of proteins and the conjugation of polyamines to proteins. Responsible for cross-linking epidermal proteins during formation of the stratum corneum. Involved in cell proliferation (By similarity).</text>
</comment>
<comment type="catalytic activity">
    <reaction evidence="4">
        <text>L-glutaminyl-[protein] + L-lysyl-[protein] = [protein]-L-lysyl-N(6)-5-L-glutamyl-[protein] + NH4(+)</text>
        <dbReference type="Rhea" id="RHEA:54816"/>
        <dbReference type="Rhea" id="RHEA-COMP:9752"/>
        <dbReference type="Rhea" id="RHEA-COMP:10207"/>
        <dbReference type="Rhea" id="RHEA-COMP:14005"/>
        <dbReference type="ChEBI" id="CHEBI:28938"/>
        <dbReference type="ChEBI" id="CHEBI:29969"/>
        <dbReference type="ChEBI" id="CHEBI:30011"/>
        <dbReference type="ChEBI" id="CHEBI:138370"/>
        <dbReference type="EC" id="2.3.2.13"/>
    </reaction>
</comment>
<comment type="cofactor">
    <cofactor evidence="1">
        <name>Ca(2+)</name>
        <dbReference type="ChEBI" id="CHEBI:29108"/>
    </cofactor>
    <text evidence="1">Binds 1 Ca(2+) ion per subunit.</text>
</comment>
<comment type="subunit">
    <text evidence="2">Interacts with PLAAT4.</text>
</comment>
<comment type="subcellular location">
    <subcellularLocation>
        <location evidence="2">Membrane</location>
        <topology evidence="2">Lipid-anchor</topology>
    </subcellularLocation>
</comment>
<comment type="PTM">
    <text evidence="2">Palmitoylated.</text>
</comment>
<comment type="PTM">
    <text evidence="2">The membrane anchorage region possesses a cluster of five cysteines within which fatty acid(s) may become thioester-linked. It is subject to phorbol ester-stimulated phosphorylation and is hypersensitive to proteolysis, which releases the enzyme in a soluble form.</text>
</comment>
<comment type="PTM">
    <text evidence="3">Tyrosine-phosphorylated.</text>
</comment>
<comment type="similarity">
    <text evidence="6">Belongs to the transglutaminase superfamily. Transglutaminase family.</text>
</comment>
<feature type="chain" id="PRO_0000213704" description="Protein-glutamine gamma-glutamyltransferase K">
    <location>
        <begin position="1"/>
        <end position="824"/>
    </location>
</feature>
<feature type="region of interest" description="Disordered" evidence="5">
    <location>
        <begin position="1"/>
        <end position="44"/>
    </location>
</feature>
<feature type="region of interest" description="Disordered" evidence="5">
    <location>
        <begin position="61"/>
        <end position="110"/>
    </location>
</feature>
<feature type="region of interest" description="Disordered" evidence="5">
    <location>
        <begin position="801"/>
        <end position="824"/>
    </location>
</feature>
<feature type="compositionally biased region" description="Basic and acidic residues" evidence="5">
    <location>
        <begin position="1"/>
        <end position="10"/>
    </location>
</feature>
<feature type="compositionally biased region" description="Low complexity" evidence="5">
    <location>
        <begin position="65"/>
        <end position="76"/>
    </location>
</feature>
<feature type="compositionally biased region" description="Basic and acidic residues" evidence="5">
    <location>
        <begin position="85"/>
        <end position="100"/>
    </location>
</feature>
<feature type="active site" evidence="4">
    <location>
        <position position="385"/>
    </location>
</feature>
<feature type="active site" evidence="4">
    <location>
        <position position="444"/>
    </location>
</feature>
<feature type="active site" evidence="4">
    <location>
        <position position="467"/>
    </location>
</feature>
<feature type="binding site" evidence="1">
    <location>
        <position position="507"/>
    </location>
    <ligand>
        <name>Ca(2+)</name>
        <dbReference type="ChEBI" id="CHEBI:29108"/>
    </ligand>
</feature>
<feature type="binding site" evidence="1">
    <location>
        <position position="509"/>
    </location>
    <ligand>
        <name>Ca(2+)</name>
        <dbReference type="ChEBI" id="CHEBI:29108"/>
    </ligand>
</feature>
<feature type="binding site" evidence="1">
    <location>
        <position position="556"/>
    </location>
    <ligand>
        <name>Ca(2+)</name>
        <dbReference type="ChEBI" id="CHEBI:29108"/>
    </ligand>
</feature>
<feature type="binding site" evidence="1">
    <location>
        <position position="561"/>
    </location>
    <ligand>
        <name>Ca(2+)</name>
        <dbReference type="ChEBI" id="CHEBI:29108"/>
    </ligand>
</feature>
<feature type="modified residue" description="Phosphothreonine" evidence="3">
    <location>
        <position position="20"/>
    </location>
</feature>
<feature type="modified residue" description="Phosphoserine" evidence="7">
    <location>
        <position position="22"/>
    </location>
</feature>
<feature type="modified residue" description="Phosphoserine" evidence="7">
    <location>
        <position position="70"/>
    </location>
</feature>
<feature type="modified residue" description="Phosphoserine" evidence="2">
    <location>
        <position position="92"/>
    </location>
</feature>
<feature type="modified residue" description="Phosphoserine" evidence="7">
    <location>
        <position position="100"/>
    </location>
</feature>
<feature type="modified residue" description="Phosphoserine" evidence="7">
    <location>
        <position position="103"/>
    </location>
</feature>
<feature type="modified residue" description="Phosphoserine" evidence="7">
    <location>
        <position position="812"/>
    </location>
</feature>
<sequence length="824" mass="90770">MEGPRSDVGRWGRSPWQPTTPSPEPEPEPEPDRSSRSRRGGGRSFWARCCGCCSCGNRADDDWGPEPSGSRSRGTSSRGGGSRGGDSRGRDSRGGRRPESRGSGVNAAGDGTIREGMLVVNGVDLLCSRSDQNRREHHTDEFEYDELILRRGQPFHIILFLNREYESSDRIALELLIGNNPEVGKGTHVIIPVGKGGSGGWKAQVTKTNGHNLTLRVHTSPNAIIGKFQFTVRTRSEAGEFQLPFDPRNEIYILFNPWCPEDIVYVDHEDWRQEYVLNESGRIYYGTEAQIGERTWNYGQFDHGVLDACLYILDRRGMPYGGRGDPVSVSRVVSAMVNSLDDNGVLIGNWTGDYSRGTNPSAWVGSVEILLSYLRTGYSVPYGQCWVFAGVTTTVLRCLGLATRTVTNFNSAHDTDTSLTMDIYFDENMKPLEHLNHDSVWNFHVWNDCWMKRPDLPSGFDGWQVVDATPQETSSGIFCCGPCSVESIKNGLVYMKYDTPFIFAEVNSDKVYWQRQDDGSFKIVYVEEKAIGTLIVTKAINSNMREDITHIYKHPEGSEAERKAVEKAAAHGSKPNVYATRDSAEDVAMQVEAQDAVMGQDLTVSVVLTNRGSSRRTVKLHLYLCVTYYTGVSGPTFKETKKEVVLAPGASDTVAMPVAYKEYKPHLVDQGAMLLNVSGHVKESGQVLAKQHTFRLRTPDLSLTLLGAAVVGQECEVQIVFKNPLPITLTNVVFRLEGSGLQRPKVLNVGDIGGNETVTLRQTFVPVRPGPRQLIASLDSPQLSQVHGVIQVDVAPSSGGRGFSEAVGDSRSGENIPMAFRGGA</sequence>
<dbReference type="EC" id="2.3.2.13"/>
<dbReference type="EMBL" id="M57263">
    <property type="protein sequence ID" value="AAA63495.1"/>
    <property type="molecule type" value="mRNA"/>
</dbReference>
<dbReference type="EMBL" id="BC097305">
    <property type="protein sequence ID" value="AAH97305.1"/>
    <property type="molecule type" value="mRNA"/>
</dbReference>
<dbReference type="PIR" id="B38423">
    <property type="entry name" value="B38423"/>
</dbReference>
<dbReference type="RefSeq" id="NP_001418267.1">
    <property type="nucleotide sequence ID" value="NM_001431338.1"/>
</dbReference>
<dbReference type="RefSeq" id="NP_001418268.1">
    <property type="nucleotide sequence ID" value="NM_001431339.1"/>
</dbReference>
<dbReference type="RefSeq" id="NP_113847.1">
    <property type="nucleotide sequence ID" value="NM_031659.2"/>
</dbReference>
<dbReference type="RefSeq" id="XP_006252076.1">
    <property type="nucleotide sequence ID" value="XM_006252014.3"/>
</dbReference>
<dbReference type="RefSeq" id="XP_008768913.1">
    <property type="nucleotide sequence ID" value="XM_008770691.2"/>
</dbReference>
<dbReference type="SMR" id="P23606"/>
<dbReference type="BioGRID" id="248784">
    <property type="interactions" value="3"/>
</dbReference>
<dbReference type="FunCoup" id="P23606">
    <property type="interactions" value="68"/>
</dbReference>
<dbReference type="IntAct" id="P23606">
    <property type="interactions" value="1"/>
</dbReference>
<dbReference type="MINT" id="P23606"/>
<dbReference type="STRING" id="10116.ENSRNOP00000027315"/>
<dbReference type="iPTMnet" id="P23606"/>
<dbReference type="PhosphoSitePlus" id="P23606"/>
<dbReference type="PaxDb" id="10116-ENSRNOP00000027315"/>
<dbReference type="Ensembl" id="ENSRNOT00000027315.6">
    <property type="protein sequence ID" value="ENSRNOP00000027315.2"/>
    <property type="gene ID" value="ENSRNOG00000020136.8"/>
</dbReference>
<dbReference type="GeneID" id="60335"/>
<dbReference type="KEGG" id="rno:60335"/>
<dbReference type="UCSC" id="RGD:61838">
    <property type="organism name" value="rat"/>
</dbReference>
<dbReference type="AGR" id="RGD:61838"/>
<dbReference type="CTD" id="7051"/>
<dbReference type="RGD" id="61838">
    <property type="gene designation" value="Tgm1"/>
</dbReference>
<dbReference type="eggNOG" id="ENOG502QQ46">
    <property type="taxonomic scope" value="Eukaryota"/>
</dbReference>
<dbReference type="GeneTree" id="ENSGT01050000244939"/>
<dbReference type="HOGENOM" id="CLU_013435_0_2_1"/>
<dbReference type="InParanoid" id="P23606"/>
<dbReference type="OrthoDB" id="49164at9989"/>
<dbReference type="PhylomeDB" id="P23606"/>
<dbReference type="TreeFam" id="TF324278"/>
<dbReference type="Reactome" id="R-RNO-6809371">
    <property type="pathway name" value="Formation of the cornified envelope"/>
</dbReference>
<dbReference type="PRO" id="PR:P23606"/>
<dbReference type="Proteomes" id="UP000002494">
    <property type="component" value="Chromosome 15"/>
</dbReference>
<dbReference type="Bgee" id="ENSRNOG00000020136">
    <property type="expression patterns" value="Expressed in esophagus and 14 other cell types or tissues"/>
</dbReference>
<dbReference type="GO" id="GO:0005912">
    <property type="term" value="C:adherens junction"/>
    <property type="evidence" value="ECO:0000266"/>
    <property type="project" value="RGD"/>
</dbReference>
<dbReference type="GO" id="GO:0016020">
    <property type="term" value="C:membrane"/>
    <property type="evidence" value="ECO:0000250"/>
    <property type="project" value="UniProtKB"/>
</dbReference>
<dbReference type="GO" id="GO:0042802">
    <property type="term" value="F:identical protein binding"/>
    <property type="evidence" value="ECO:0000266"/>
    <property type="project" value="RGD"/>
</dbReference>
<dbReference type="GO" id="GO:0046872">
    <property type="term" value="F:metal ion binding"/>
    <property type="evidence" value="ECO:0007669"/>
    <property type="project" value="UniProtKB-KW"/>
</dbReference>
<dbReference type="GO" id="GO:0003810">
    <property type="term" value="F:protein-glutamine gamma-glutamyltransferase activity"/>
    <property type="evidence" value="ECO:0000266"/>
    <property type="project" value="RGD"/>
</dbReference>
<dbReference type="GO" id="GO:0009887">
    <property type="term" value="P:animal organ morphogenesis"/>
    <property type="evidence" value="ECO:0000266"/>
    <property type="project" value="RGD"/>
</dbReference>
<dbReference type="GO" id="GO:0031424">
    <property type="term" value="P:keratinization"/>
    <property type="evidence" value="ECO:0007669"/>
    <property type="project" value="UniProtKB-KW"/>
</dbReference>
<dbReference type="GO" id="GO:0030216">
    <property type="term" value="P:keratinocyte differentiation"/>
    <property type="evidence" value="ECO:0000266"/>
    <property type="project" value="RGD"/>
</dbReference>
<dbReference type="GO" id="GO:0045787">
    <property type="term" value="P:positive regulation of cell cycle"/>
    <property type="evidence" value="ECO:0000250"/>
    <property type="project" value="UniProtKB"/>
</dbReference>
<dbReference type="GO" id="GO:0010838">
    <property type="term" value="P:positive regulation of keratinocyte proliferation"/>
    <property type="evidence" value="ECO:0000250"/>
    <property type="project" value="UniProtKB"/>
</dbReference>
<dbReference type="FunFam" id="2.60.40.10:FF:000090">
    <property type="entry name" value="Protein-glutamine gamma-glutamyltransferase 2"/>
    <property type="match status" value="1"/>
</dbReference>
<dbReference type="FunFam" id="3.90.260.10:FF:000001">
    <property type="entry name" value="Protein-glutamine gamma-glutamyltransferase 2"/>
    <property type="match status" value="1"/>
</dbReference>
<dbReference type="FunFam" id="2.60.40.10:FF:000171">
    <property type="entry name" value="protein-glutamine gamma-glutamyltransferase 6"/>
    <property type="match status" value="1"/>
</dbReference>
<dbReference type="FunFam" id="2.60.40.10:FF:001143">
    <property type="entry name" value="Protein-glutamine gamma-glutamyltransferase K"/>
    <property type="match status" value="1"/>
</dbReference>
<dbReference type="Gene3D" id="2.60.40.10">
    <property type="entry name" value="Immunoglobulins"/>
    <property type="match status" value="3"/>
</dbReference>
<dbReference type="Gene3D" id="3.90.260.10">
    <property type="entry name" value="Transglutaminase-like"/>
    <property type="match status" value="1"/>
</dbReference>
<dbReference type="InterPro" id="IPR013783">
    <property type="entry name" value="Ig-like_fold"/>
</dbReference>
<dbReference type="InterPro" id="IPR014756">
    <property type="entry name" value="Ig_E-set"/>
</dbReference>
<dbReference type="InterPro" id="IPR038765">
    <property type="entry name" value="Papain-like_cys_pep_sf"/>
</dbReference>
<dbReference type="InterPro" id="IPR050779">
    <property type="entry name" value="Transglutaminase"/>
</dbReference>
<dbReference type="InterPro" id="IPR002931">
    <property type="entry name" value="Transglutaminase-like"/>
</dbReference>
<dbReference type="InterPro" id="IPR036985">
    <property type="entry name" value="Transglutaminase-like_sf"/>
</dbReference>
<dbReference type="InterPro" id="IPR023608">
    <property type="entry name" value="Transglutaminase_animal"/>
</dbReference>
<dbReference type="InterPro" id="IPR013808">
    <property type="entry name" value="Transglutaminase_AS"/>
</dbReference>
<dbReference type="InterPro" id="IPR008958">
    <property type="entry name" value="Transglutaminase_C"/>
</dbReference>
<dbReference type="InterPro" id="IPR036238">
    <property type="entry name" value="Transglutaminase_C_sf"/>
</dbReference>
<dbReference type="InterPro" id="IPR001102">
    <property type="entry name" value="Transglutaminase_N"/>
</dbReference>
<dbReference type="PANTHER" id="PTHR11590">
    <property type="entry name" value="PROTEIN-GLUTAMINE GAMMA-GLUTAMYLTRANSFERASE"/>
    <property type="match status" value="1"/>
</dbReference>
<dbReference type="PANTHER" id="PTHR11590:SF49">
    <property type="entry name" value="PROTEIN-GLUTAMINE GAMMA-GLUTAMYLTRANSFERASE K"/>
    <property type="match status" value="1"/>
</dbReference>
<dbReference type="Pfam" id="PF00927">
    <property type="entry name" value="Transglut_C"/>
    <property type="match status" value="2"/>
</dbReference>
<dbReference type="Pfam" id="PF01841">
    <property type="entry name" value="Transglut_core"/>
    <property type="match status" value="1"/>
</dbReference>
<dbReference type="Pfam" id="PF00868">
    <property type="entry name" value="Transglut_N"/>
    <property type="match status" value="1"/>
</dbReference>
<dbReference type="PIRSF" id="PIRSF000459">
    <property type="entry name" value="TGM_EBP42"/>
    <property type="match status" value="1"/>
</dbReference>
<dbReference type="SMART" id="SM00460">
    <property type="entry name" value="TGc"/>
    <property type="match status" value="1"/>
</dbReference>
<dbReference type="SUPFAM" id="SSF54001">
    <property type="entry name" value="Cysteine proteinases"/>
    <property type="match status" value="1"/>
</dbReference>
<dbReference type="SUPFAM" id="SSF81296">
    <property type="entry name" value="E set domains"/>
    <property type="match status" value="1"/>
</dbReference>
<dbReference type="SUPFAM" id="SSF49309">
    <property type="entry name" value="Transglutaminase, two C-terminal domains"/>
    <property type="match status" value="2"/>
</dbReference>
<dbReference type="PROSITE" id="PS00547">
    <property type="entry name" value="TRANSGLUTAMINASES"/>
    <property type="match status" value="1"/>
</dbReference>
<proteinExistence type="evidence at protein level"/>
<keyword id="KW-0012">Acyltransferase</keyword>
<keyword id="KW-0106">Calcium</keyword>
<keyword id="KW-0417">Keratinization</keyword>
<keyword id="KW-0449">Lipoprotein</keyword>
<keyword id="KW-0472">Membrane</keyword>
<keyword id="KW-0479">Metal-binding</keyword>
<keyword id="KW-0564">Palmitate</keyword>
<keyword id="KW-0597">Phosphoprotein</keyword>
<keyword id="KW-1185">Reference proteome</keyword>
<keyword id="KW-0808">Transferase</keyword>
<reference key="1">
    <citation type="journal article" date="1990" name="Proc. Natl. Acad. Sci. U.S.A.">
        <title>Primary structure of keratinocyte transglutaminase.</title>
        <authorList>
            <person name="Phillips M.A."/>
            <person name="Stewart B.E."/>
            <person name="Qin Q."/>
            <person name="Chakravarty R."/>
            <person name="Floyd E.E."/>
            <person name="Jetten A.M."/>
            <person name="Rice R.H."/>
        </authorList>
    </citation>
    <scope>NUCLEOTIDE SEQUENCE [MRNA]</scope>
</reference>
<reference key="2">
    <citation type="journal article" date="2004" name="Genome Res.">
        <title>The status, quality, and expansion of the NIH full-length cDNA project: the Mammalian Gene Collection (MGC).</title>
        <authorList>
            <consortium name="The MGC Project Team"/>
        </authorList>
    </citation>
    <scope>NUCLEOTIDE SEQUENCE [LARGE SCALE MRNA]</scope>
    <source>
        <tissue>Placenta</tissue>
    </source>
</reference>
<reference key="3">
    <citation type="journal article" date="2012" name="Nat. Commun.">
        <title>Quantitative maps of protein phosphorylation sites across 14 different rat organs and tissues.</title>
        <authorList>
            <person name="Lundby A."/>
            <person name="Secher A."/>
            <person name="Lage K."/>
            <person name="Nordsborg N.B."/>
            <person name="Dmytriyev A."/>
            <person name="Lundby C."/>
            <person name="Olsen J.V."/>
        </authorList>
    </citation>
    <scope>PHOSPHORYLATION [LARGE SCALE ANALYSIS] AT SER-22; SER-70; SER-100; SER-103 AND SER-812</scope>
    <scope>IDENTIFICATION BY MASS SPECTROMETRY [LARGE SCALE ANALYSIS]</scope>
</reference>
<organism>
    <name type="scientific">Rattus norvegicus</name>
    <name type="common">Rat</name>
    <dbReference type="NCBI Taxonomy" id="10116"/>
    <lineage>
        <taxon>Eukaryota</taxon>
        <taxon>Metazoa</taxon>
        <taxon>Chordata</taxon>
        <taxon>Craniata</taxon>
        <taxon>Vertebrata</taxon>
        <taxon>Euteleostomi</taxon>
        <taxon>Mammalia</taxon>
        <taxon>Eutheria</taxon>
        <taxon>Euarchontoglires</taxon>
        <taxon>Glires</taxon>
        <taxon>Rodentia</taxon>
        <taxon>Myomorpha</taxon>
        <taxon>Muroidea</taxon>
        <taxon>Muridae</taxon>
        <taxon>Murinae</taxon>
        <taxon>Rattus</taxon>
    </lineage>
</organism>
<name>TGM1_RAT</name>
<evidence type="ECO:0000250" key="1"/>
<evidence type="ECO:0000250" key="2">
    <source>
        <dbReference type="UniProtKB" id="P22735"/>
    </source>
</evidence>
<evidence type="ECO:0000250" key="3">
    <source>
        <dbReference type="UniProtKB" id="Q9JLF6"/>
    </source>
</evidence>
<evidence type="ECO:0000255" key="4">
    <source>
        <dbReference type="PROSITE-ProRule" id="PRU10024"/>
    </source>
</evidence>
<evidence type="ECO:0000256" key="5">
    <source>
        <dbReference type="SAM" id="MobiDB-lite"/>
    </source>
</evidence>
<evidence type="ECO:0000305" key="6"/>
<evidence type="ECO:0007744" key="7">
    <source>
    </source>
</evidence>
<protein>
    <recommendedName>
        <fullName>Protein-glutamine gamma-glutamyltransferase K</fullName>
        <ecNumber>2.3.2.13</ecNumber>
    </recommendedName>
    <alternativeName>
        <fullName>Epidermal TGase</fullName>
    </alternativeName>
    <alternativeName>
        <fullName>Transglutaminase K</fullName>
        <shortName>TG(K)</shortName>
        <shortName>TGK</shortName>
        <shortName>TGase K</shortName>
    </alternativeName>
    <alternativeName>
        <fullName>Transglutaminase-1</fullName>
        <shortName>TGase-1</shortName>
    </alternativeName>
</protein>
<accession>P23606</accession>
<accession>Q4QRA6</accession>
<gene>
    <name type="primary">Tgm1</name>
</gene>